<evidence type="ECO:0000250" key="1">
    <source>
        <dbReference type="UniProtKB" id="A0A0B5LB52"/>
    </source>
</evidence>
<evidence type="ECO:0000255" key="2"/>
<evidence type="ECO:0000269" key="3">
    <source>
    </source>
</evidence>
<evidence type="ECO:0000303" key="4">
    <source>
    </source>
</evidence>
<evidence type="ECO:0000305" key="5"/>
<evidence type="ECO:0000305" key="6">
    <source>
    </source>
</evidence>
<organism>
    <name type="scientific">Penicillium roqueforti (strain FM164)</name>
    <dbReference type="NCBI Taxonomy" id="1365484"/>
    <lineage>
        <taxon>Eukaryota</taxon>
        <taxon>Fungi</taxon>
        <taxon>Dikarya</taxon>
        <taxon>Ascomycota</taxon>
        <taxon>Pezizomycotina</taxon>
        <taxon>Eurotiomycetes</taxon>
        <taxon>Eurotiomycetidae</taxon>
        <taxon>Eurotiales</taxon>
        <taxon>Aspergillaceae</taxon>
        <taxon>Penicillium</taxon>
    </lineage>
</organism>
<accession>W6R4H8</accession>
<sequence length="298" mass="34083">MDKGTSFFTTPSFSATTRAIFNTMPQWFSFAVGLLIAYPLLINSLRYRRLKQLQKKFYFPTRESMAKMTDEEAFQIQKETAQLEFPFMFVKAGQFALFRTYGIPTISHLLIKTGQFSKPETSFKRYTDTAALIGEMVENSPTSQRAFLSVARTRFLHSGYQASGKILDTDLLYTLALFAVQPVNFIAAFEWRPLSDLERCAIGTFWKSLGDALGISSDILPSGKTGFRDGIHWLEEVDTWSQEYEVKYMVPDAQNRESADQATAVLLYNLPKVFHPVGLQFTSFMMDDRLRKAMLYVE</sequence>
<name>MPAB_PENRF</name>
<dbReference type="EC" id="1.-.-.-" evidence="1"/>
<dbReference type="EMBL" id="HG792019">
    <property type="protein sequence ID" value="CDM36727.1"/>
    <property type="molecule type" value="Genomic_DNA"/>
</dbReference>
<dbReference type="SMR" id="W6R4H8"/>
<dbReference type="STRING" id="1365484.W6R4H8"/>
<dbReference type="OMA" id="ALFRTYC"/>
<dbReference type="OrthoDB" id="545169at2759"/>
<dbReference type="UniPathway" id="UPA00213"/>
<dbReference type="Proteomes" id="UP000030686">
    <property type="component" value="Unassembled WGS sequence"/>
</dbReference>
<dbReference type="GO" id="GO:0005789">
    <property type="term" value="C:endoplasmic reticulum membrane"/>
    <property type="evidence" value="ECO:0000250"/>
    <property type="project" value="GO_Central"/>
</dbReference>
<dbReference type="GO" id="GO:0016491">
    <property type="term" value="F:oxidoreductase activity"/>
    <property type="evidence" value="ECO:0000250"/>
    <property type="project" value="GO_Central"/>
</dbReference>
<dbReference type="GO" id="GO:0140722">
    <property type="term" value="P:mycophenolic acid biosynthetic process"/>
    <property type="evidence" value="ECO:0000250"/>
    <property type="project" value="GO_Central"/>
</dbReference>
<dbReference type="GO" id="GO:0016114">
    <property type="term" value="P:terpenoid biosynthetic process"/>
    <property type="evidence" value="ECO:0007669"/>
    <property type="project" value="UniProtKB-UniPathway"/>
</dbReference>
<dbReference type="InterPro" id="IPR046366">
    <property type="entry name" value="MPAB"/>
</dbReference>
<dbReference type="InterPro" id="IPR018713">
    <property type="entry name" value="MPAB/Lcp_cat_dom"/>
</dbReference>
<dbReference type="PANTHER" id="PTHR36124">
    <property type="match status" value="1"/>
</dbReference>
<dbReference type="PANTHER" id="PTHR36124:SF6">
    <property type="entry name" value="ER-BOUND OXYGENASE MPAB_MPAB'_RUBBER OXYGENASE CATALYTIC DOMAIN-CONTAINING PROTEIN"/>
    <property type="match status" value="1"/>
</dbReference>
<dbReference type="Pfam" id="PF09995">
    <property type="entry name" value="MPAB_Lcp_cat"/>
    <property type="match status" value="1"/>
</dbReference>
<proteinExistence type="inferred from homology"/>
<gene>
    <name evidence="4" type="primary">mpaB</name>
    <name type="ORF">PROQFM164_S05g000560</name>
</gene>
<reference key="1">
    <citation type="journal article" date="2014" name="Nat. Commun.">
        <title>Multiple recent horizontal transfers of a large genomic region in cheese making fungi.</title>
        <authorList>
            <person name="Cheeseman K."/>
            <person name="Ropars J."/>
            <person name="Renault P."/>
            <person name="Dupont J."/>
            <person name="Gouzy J."/>
            <person name="Branca A."/>
            <person name="Abraham A.-L."/>
            <person name="Ceppi M."/>
            <person name="Conseiller E."/>
            <person name="Debuchy R."/>
            <person name="Malagnac F."/>
            <person name="Goarin A."/>
            <person name="Silar P."/>
            <person name="Lacoste S."/>
            <person name="Sallet E."/>
            <person name="Bensimon A."/>
            <person name="Giraud T."/>
            <person name="Brygoo Y."/>
        </authorList>
    </citation>
    <scope>NUCLEOTIDE SEQUENCE [LARGE SCALE GENOMIC DNA]</scope>
    <source>
        <strain>FM164</strain>
    </source>
</reference>
<reference key="2">
    <citation type="journal article" date="2016" name="PLoS ONE">
        <title>Identification and functional analysis of the mycophenolic acid gene cluster of Penicillium roqueforti.</title>
        <authorList>
            <person name="Del-Cid A."/>
            <person name="Gil-Duran C."/>
            <person name="Vaca I."/>
            <person name="Rojas-Aedo J.F."/>
            <person name="Garcia-Rico R.O."/>
            <person name="Levican G."/>
            <person name="Chavez R."/>
        </authorList>
    </citation>
    <scope>FUNCTION</scope>
    <scope>DISRUPTION PHENOTYPE</scope>
    <scope>PATHWAY</scope>
</reference>
<keyword id="KW-0256">Endoplasmic reticulum</keyword>
<keyword id="KW-0472">Membrane</keyword>
<keyword id="KW-0560">Oxidoreductase</keyword>
<keyword id="KW-1185">Reference proteome</keyword>
<keyword id="KW-0812">Transmembrane</keyword>
<keyword id="KW-1133">Transmembrane helix</keyword>
<comment type="function">
    <text evidence="1 3 6">ER-bound oxygenase; part of the gene cluster that mediates the biosynthesis of mycophenolic acid (MPA), the first isolated antibiotic natural product in the world obtained from a culture of Penicillium brevicompactum in 1893 (PubMed:26751579). MpaB catalyzes the oxidative cleavage the C19-C20 double bond in farnesyl-DHMP (FDHMP) to yield FDHMP-3C via a mycophenolic aldehyde intermediate (By similarity). The first step of the pathway is the synthesis of 5-methylorsellinic acid (5MOA) by the cytosolic polyketide synthase mpaC. 5MOA is then converted to the phthalide compound 5,7-dihydroxy-4,6-dimethylphthalide (DHMP) by the endoplasmic reticulum-bound cytochrome P450 monooxygenase mpaDE. MpaDE first catalyzes hydroxylation of 5-MOA to 4,6-dihydroxy-2-(hydroxymethyl)-3-methylbenzoic acid (DHMB). MpaDE then acts as a lactone synthase that catalyzes the ring closure to convert DHMB into DHMP. The next step is the prenylation of DHMP by the Golgi apparatus-associated prenyltransferase mpaA to yield farnesyl-DHMP (FDHMP). The ER-bound oxygenase mpaB then mediates the oxidative cleavage the C19-C20 double bond in FDHMP to yield FDHMP-3C via a mycophenolic aldehyde intermediate. The O-methyltransferase mpaG catalyzes the methylation of FDHMP-3C to yield MFDHMP-3C. After the cytosolic methylation of FDHMP-3C, MFDHMP-3C enters into peroxisomes probably via free diffusion due to its low molecular weight. Upon a peroxisomal CoA ligation reaction, catalyzed by a beta-oxidation component enzyme acyl-CoA ligase ACL891, MFDHMP-3C-CoA would then be restricted to peroxisomes for the following beta-oxidation pathway steps. The peroxisomal beta-oxidation machinery than converts MFDHMP-3C-CoA into MPA_CoA, via a beta-oxidation chain-shortening process. Finally mpaH acts as a peroxisomal acyl-CoA hydrolase with high substrate specificity toward MPA-CoA to release the final product MPA (Probable) (PubMed:26751579).</text>
</comment>
<comment type="catalytic activity">
    <reaction evidence="1">
        <text>4-farnesyl-3,5-dihydroxy-6-methylphthalide + AH2 + 2 O2 = (4E,8E)-10-(4,6-dihydroxy-7-methyl-3-oxo-1,3-dihydro-2-benzofuran-5-yl)-4,8-dimethyldeca-4,8-dienoate + acetone + A + H2O + H(+)</text>
        <dbReference type="Rhea" id="RHEA:66688"/>
        <dbReference type="ChEBI" id="CHEBI:13193"/>
        <dbReference type="ChEBI" id="CHEBI:15347"/>
        <dbReference type="ChEBI" id="CHEBI:15377"/>
        <dbReference type="ChEBI" id="CHEBI:15378"/>
        <dbReference type="ChEBI" id="CHEBI:15379"/>
        <dbReference type="ChEBI" id="CHEBI:17499"/>
        <dbReference type="ChEBI" id="CHEBI:167386"/>
        <dbReference type="ChEBI" id="CHEBI:167389"/>
    </reaction>
    <physiologicalReaction direction="left-to-right" evidence="1">
        <dbReference type="Rhea" id="RHEA:66689"/>
    </physiologicalReaction>
</comment>
<comment type="pathway">
    <text evidence="6">Secondary metabolite biosynthesis; terpenoid biosynthesis.</text>
</comment>
<comment type="subcellular location">
    <subcellularLocation>
        <location evidence="1">Endoplasmic reticulum membrane</location>
        <topology evidence="2">Single-pass membrane protein</topology>
    </subcellularLocation>
</comment>
<comment type="disruption phenotype">
    <text evidence="3">Results in dramatic reduction in MPA production.</text>
</comment>
<comment type="similarity">
    <text evidence="5">Belongs to the mpaB oxygenase family.</text>
</comment>
<feature type="chain" id="PRO_0000449213" description="ER-bound oxygenase mpaB">
    <location>
        <begin position="1"/>
        <end position="298"/>
    </location>
</feature>
<feature type="topological domain" description="Lumenal" evidence="5">
    <location>
        <begin position="1"/>
        <end position="24"/>
    </location>
</feature>
<feature type="transmembrane region" description="Helical" evidence="2">
    <location>
        <begin position="25"/>
        <end position="45"/>
    </location>
</feature>
<feature type="topological domain" description="Cytoplasmic" evidence="5">
    <location>
        <begin position="46"/>
        <end position="298"/>
    </location>
</feature>
<protein>
    <recommendedName>
        <fullName evidence="1">ER-bound oxygenase mpaB</fullName>
        <ecNumber evidence="1">1.-.-.-</ecNumber>
    </recommendedName>
    <alternativeName>
        <fullName evidence="4">Mycophenolic acid biosynthesis cluster protein B</fullName>
    </alternativeName>
</protein>